<comment type="function">
    <text evidence="1">Forms part of the ribosomal stalk, playing a central role in the interaction of the ribosome with GTP-bound translation factors.</text>
</comment>
<comment type="subunit">
    <text evidence="1">Part of the ribosomal stalk of the 50S ribosomal subunit. The N-terminus interacts with L11 and the large rRNA to form the base of the stalk. The C-terminus forms an elongated spine to which L12 dimers bind in a sequential fashion forming a multimeric L10(L12)X complex.</text>
</comment>
<comment type="similarity">
    <text evidence="1">Belongs to the universal ribosomal protein uL10 family.</text>
</comment>
<evidence type="ECO:0000255" key="1">
    <source>
        <dbReference type="HAMAP-Rule" id="MF_00362"/>
    </source>
</evidence>
<evidence type="ECO:0000305" key="2"/>
<organism>
    <name type="scientific">Blochmanniella pennsylvanica (strain BPEN)</name>
    <dbReference type="NCBI Taxonomy" id="291272"/>
    <lineage>
        <taxon>Bacteria</taxon>
        <taxon>Pseudomonadati</taxon>
        <taxon>Pseudomonadota</taxon>
        <taxon>Gammaproteobacteria</taxon>
        <taxon>Enterobacterales</taxon>
        <taxon>Enterobacteriaceae</taxon>
        <taxon>ant endosymbionts</taxon>
        <taxon>Candidatus Blochmanniella</taxon>
    </lineage>
</organism>
<dbReference type="EMBL" id="CP000016">
    <property type="protein sequence ID" value="AAZ41185.1"/>
    <property type="molecule type" value="Genomic_DNA"/>
</dbReference>
<dbReference type="SMR" id="Q492B7"/>
<dbReference type="STRING" id="291272.BPEN_579"/>
<dbReference type="KEGG" id="bpn:BPEN_579"/>
<dbReference type="eggNOG" id="COG0244">
    <property type="taxonomic scope" value="Bacteria"/>
</dbReference>
<dbReference type="HOGENOM" id="CLU_092227_0_2_6"/>
<dbReference type="OrthoDB" id="9808307at2"/>
<dbReference type="Proteomes" id="UP000007794">
    <property type="component" value="Chromosome"/>
</dbReference>
<dbReference type="GO" id="GO:1990904">
    <property type="term" value="C:ribonucleoprotein complex"/>
    <property type="evidence" value="ECO:0007669"/>
    <property type="project" value="UniProtKB-KW"/>
</dbReference>
<dbReference type="GO" id="GO:0005840">
    <property type="term" value="C:ribosome"/>
    <property type="evidence" value="ECO:0007669"/>
    <property type="project" value="UniProtKB-KW"/>
</dbReference>
<dbReference type="GO" id="GO:0070180">
    <property type="term" value="F:large ribosomal subunit rRNA binding"/>
    <property type="evidence" value="ECO:0007669"/>
    <property type="project" value="UniProtKB-UniRule"/>
</dbReference>
<dbReference type="GO" id="GO:0006412">
    <property type="term" value="P:translation"/>
    <property type="evidence" value="ECO:0007669"/>
    <property type="project" value="UniProtKB-UniRule"/>
</dbReference>
<dbReference type="CDD" id="cd05797">
    <property type="entry name" value="Ribosomal_L10"/>
    <property type="match status" value="1"/>
</dbReference>
<dbReference type="Gene3D" id="3.30.70.1730">
    <property type="match status" value="1"/>
</dbReference>
<dbReference type="HAMAP" id="MF_00362">
    <property type="entry name" value="Ribosomal_uL10"/>
    <property type="match status" value="1"/>
</dbReference>
<dbReference type="InterPro" id="IPR001790">
    <property type="entry name" value="Ribosomal_uL10"/>
</dbReference>
<dbReference type="InterPro" id="IPR043141">
    <property type="entry name" value="Ribosomal_uL10-like_sf"/>
</dbReference>
<dbReference type="InterPro" id="IPR022973">
    <property type="entry name" value="Ribosomal_uL10_bac"/>
</dbReference>
<dbReference type="InterPro" id="IPR047865">
    <property type="entry name" value="Ribosomal_uL10_bac_type"/>
</dbReference>
<dbReference type="NCBIfam" id="NF000955">
    <property type="entry name" value="PRK00099.1-1"/>
    <property type="match status" value="1"/>
</dbReference>
<dbReference type="PANTHER" id="PTHR11560">
    <property type="entry name" value="39S RIBOSOMAL PROTEIN L10, MITOCHONDRIAL"/>
    <property type="match status" value="1"/>
</dbReference>
<dbReference type="Pfam" id="PF00466">
    <property type="entry name" value="Ribosomal_L10"/>
    <property type="match status" value="1"/>
</dbReference>
<dbReference type="SUPFAM" id="SSF160369">
    <property type="entry name" value="Ribosomal protein L10-like"/>
    <property type="match status" value="1"/>
</dbReference>
<protein>
    <recommendedName>
        <fullName evidence="1">Large ribosomal subunit protein uL10</fullName>
    </recommendedName>
    <alternativeName>
        <fullName evidence="2">50S ribosomal protein L10</fullName>
    </alternativeName>
</protein>
<proteinExistence type="inferred from homology"/>
<keyword id="KW-1185">Reference proteome</keyword>
<keyword id="KW-0687">Ribonucleoprotein</keyword>
<keyword id="KW-0689">Ribosomal protein</keyword>
<keyword id="KW-0694">RNA-binding</keyword>
<keyword id="KW-0699">rRNA-binding</keyword>
<name>RL10_BLOPB</name>
<accession>Q492B7</accession>
<gene>
    <name evidence="1" type="primary">rplJ</name>
    <name type="ordered locus">BPEN_579</name>
</gene>
<reference key="1">
    <citation type="journal article" date="2005" name="Genome Res.">
        <title>Genome sequence of Blochmannia pennsylvanicus indicates parallel evolutionary trends among bacterial mutualists of insects.</title>
        <authorList>
            <person name="Degnan P.H."/>
            <person name="Lazarus A.B."/>
            <person name="Wernegreen J.J."/>
        </authorList>
    </citation>
    <scope>NUCLEOTIDE SEQUENCE [LARGE SCALE GENOMIC DNA]</scope>
    <source>
        <strain>BPEN</strain>
    </source>
</reference>
<feature type="chain" id="PRO_1000120920" description="Large ribosomal subunit protein uL10">
    <location>
        <begin position="1"/>
        <end position="163"/>
    </location>
</feature>
<sequence>MALNLQKKEEIICKIHETATRAVSVVVATLDGIAVNEVTKLRKEARDIGVCVHVIRNTLMRKVIENTPLACLREILTGQNIVAFSMNQPRDSARIFVKFTKNHEHFKIKGAVFEGKFIPASKINLLSDLPNHKEAIFRLITIMKTSSIGSLIHILHILSNQKQ</sequence>